<evidence type="ECO:0000255" key="1">
    <source>
        <dbReference type="HAMAP-Rule" id="MF_01589"/>
    </source>
</evidence>
<dbReference type="EC" id="2.1.3.-" evidence="1"/>
<dbReference type="EMBL" id="CP000931">
    <property type="protein sequence ID" value="ABZ76481.1"/>
    <property type="molecule type" value="Genomic_DNA"/>
</dbReference>
<dbReference type="RefSeq" id="WP_012277013.1">
    <property type="nucleotide sequence ID" value="NC_010334.1"/>
</dbReference>
<dbReference type="SMR" id="B0TSA1"/>
<dbReference type="STRING" id="458817.Shal_1916"/>
<dbReference type="KEGG" id="shl:Shal_1916"/>
<dbReference type="eggNOG" id="COG2226">
    <property type="taxonomic scope" value="Bacteria"/>
</dbReference>
<dbReference type="HOGENOM" id="CLU_078475_0_0_6"/>
<dbReference type="OrthoDB" id="9779941at2"/>
<dbReference type="Proteomes" id="UP000001317">
    <property type="component" value="Chromosome"/>
</dbReference>
<dbReference type="GO" id="GO:0016743">
    <property type="term" value="F:carboxyl- or carbamoyltransferase activity"/>
    <property type="evidence" value="ECO:0007669"/>
    <property type="project" value="UniProtKB-UniRule"/>
</dbReference>
<dbReference type="GO" id="GO:1904047">
    <property type="term" value="F:S-adenosyl-L-methionine binding"/>
    <property type="evidence" value="ECO:0007669"/>
    <property type="project" value="UniProtKB-UniRule"/>
</dbReference>
<dbReference type="GO" id="GO:0002098">
    <property type="term" value="P:tRNA wobble uridine modification"/>
    <property type="evidence" value="ECO:0007669"/>
    <property type="project" value="InterPro"/>
</dbReference>
<dbReference type="CDD" id="cd02440">
    <property type="entry name" value="AdoMet_MTases"/>
    <property type="match status" value="1"/>
</dbReference>
<dbReference type="Gene3D" id="3.40.50.150">
    <property type="entry name" value="Vaccinia Virus protein VP39"/>
    <property type="match status" value="1"/>
</dbReference>
<dbReference type="HAMAP" id="MF_01589">
    <property type="entry name" value="Cx_SAM_synthase"/>
    <property type="match status" value="1"/>
</dbReference>
<dbReference type="InterPro" id="IPR005271">
    <property type="entry name" value="CmoA"/>
</dbReference>
<dbReference type="InterPro" id="IPR041698">
    <property type="entry name" value="Methyltransf_25"/>
</dbReference>
<dbReference type="InterPro" id="IPR029063">
    <property type="entry name" value="SAM-dependent_MTases_sf"/>
</dbReference>
<dbReference type="NCBIfam" id="TIGR00740">
    <property type="entry name" value="carboxy-S-adenosyl-L-methionine synthase CmoA"/>
    <property type="match status" value="1"/>
</dbReference>
<dbReference type="NCBIfam" id="NF011995">
    <property type="entry name" value="PRK15451.1"/>
    <property type="match status" value="1"/>
</dbReference>
<dbReference type="PANTHER" id="PTHR43861:SF2">
    <property type="entry name" value="CARBOXY-S-ADENOSYL-L-METHIONINE SYNTHASE"/>
    <property type="match status" value="1"/>
</dbReference>
<dbReference type="PANTHER" id="PTHR43861">
    <property type="entry name" value="TRANS-ACONITATE 2-METHYLTRANSFERASE-RELATED"/>
    <property type="match status" value="1"/>
</dbReference>
<dbReference type="Pfam" id="PF13649">
    <property type="entry name" value="Methyltransf_25"/>
    <property type="match status" value="1"/>
</dbReference>
<dbReference type="PIRSF" id="PIRSF006325">
    <property type="entry name" value="MeTrfase_bac"/>
    <property type="match status" value="1"/>
</dbReference>
<dbReference type="SUPFAM" id="SSF53335">
    <property type="entry name" value="S-adenosyl-L-methionine-dependent methyltransferases"/>
    <property type="match status" value="1"/>
</dbReference>
<sequence length="243" mass="27482">MNSSTDNLFAKPYEQVSDFQFDDKVAGVFNDMIRRSVPGYGQIINTIGDLAQKYAATNTKIYDLGCSLGAATLSIRRRVEGRNCQIVAIDNSESMIERCNENLSAYVSETPVELICGDIRDIKIENASLVVLNFTMQFLSPDDRENLLENIYQGLIPGGLLILSEKLYFKEDKIQSTLDDLHLDFKRANGYSELEISQKRSSLENVMKPDTLAEHENRIRSLGFSQFSVWFQCFNFASMVAIK</sequence>
<comment type="function">
    <text evidence="1">Catalyzes the conversion of S-adenosyl-L-methionine (SAM) to carboxy-S-adenosyl-L-methionine (Cx-SAM).</text>
</comment>
<comment type="catalytic activity">
    <reaction evidence="1">
        <text>prephenate + S-adenosyl-L-methionine = carboxy-S-adenosyl-L-methionine + 3-phenylpyruvate + H2O</text>
        <dbReference type="Rhea" id="RHEA:51692"/>
        <dbReference type="ChEBI" id="CHEBI:15377"/>
        <dbReference type="ChEBI" id="CHEBI:18005"/>
        <dbReference type="ChEBI" id="CHEBI:29934"/>
        <dbReference type="ChEBI" id="CHEBI:59789"/>
        <dbReference type="ChEBI" id="CHEBI:134278"/>
    </reaction>
</comment>
<comment type="subunit">
    <text evidence="1">Homodimer.</text>
</comment>
<comment type="similarity">
    <text evidence="1">Belongs to the class I-like SAM-binding methyltransferase superfamily. Cx-SAM synthase family.</text>
</comment>
<accession>B0TSA1</accession>
<name>CMOA_SHEHH</name>
<proteinExistence type="inferred from homology"/>
<gene>
    <name evidence="1" type="primary">cmoA</name>
    <name type="ordered locus">Shal_1916</name>
</gene>
<keyword id="KW-0949">S-adenosyl-L-methionine</keyword>
<keyword id="KW-0808">Transferase</keyword>
<feature type="chain" id="PRO_1000087964" description="Carboxy-S-adenosyl-L-methionine synthase">
    <location>
        <begin position="1"/>
        <end position="243"/>
    </location>
</feature>
<feature type="binding site" evidence="1">
    <location>
        <position position="40"/>
    </location>
    <ligand>
        <name>S-adenosyl-L-methionine</name>
        <dbReference type="ChEBI" id="CHEBI:59789"/>
    </ligand>
</feature>
<feature type="binding site" evidence="1">
    <location>
        <begin position="65"/>
        <end position="67"/>
    </location>
    <ligand>
        <name>S-adenosyl-L-methionine</name>
        <dbReference type="ChEBI" id="CHEBI:59789"/>
    </ligand>
</feature>
<feature type="binding site" evidence="1">
    <location>
        <begin position="90"/>
        <end position="91"/>
    </location>
    <ligand>
        <name>S-adenosyl-L-methionine</name>
        <dbReference type="ChEBI" id="CHEBI:59789"/>
    </ligand>
</feature>
<feature type="binding site" evidence="1">
    <location>
        <begin position="118"/>
        <end position="119"/>
    </location>
    <ligand>
        <name>S-adenosyl-L-methionine</name>
        <dbReference type="ChEBI" id="CHEBI:59789"/>
    </ligand>
</feature>
<feature type="binding site" evidence="1">
    <location>
        <position position="133"/>
    </location>
    <ligand>
        <name>S-adenosyl-L-methionine</name>
        <dbReference type="ChEBI" id="CHEBI:59789"/>
    </ligand>
</feature>
<feature type="binding site" evidence="1">
    <location>
        <position position="200"/>
    </location>
    <ligand>
        <name>S-adenosyl-L-methionine</name>
        <dbReference type="ChEBI" id="CHEBI:59789"/>
    </ligand>
</feature>
<organism>
    <name type="scientific">Shewanella halifaxensis (strain HAW-EB4)</name>
    <dbReference type="NCBI Taxonomy" id="458817"/>
    <lineage>
        <taxon>Bacteria</taxon>
        <taxon>Pseudomonadati</taxon>
        <taxon>Pseudomonadota</taxon>
        <taxon>Gammaproteobacteria</taxon>
        <taxon>Alteromonadales</taxon>
        <taxon>Shewanellaceae</taxon>
        <taxon>Shewanella</taxon>
    </lineage>
</organism>
<protein>
    <recommendedName>
        <fullName evidence="1">Carboxy-S-adenosyl-L-methionine synthase</fullName>
        <shortName evidence="1">Cx-SAM synthase</shortName>
        <ecNumber evidence="1">2.1.3.-</ecNumber>
    </recommendedName>
</protein>
<reference key="1">
    <citation type="submission" date="2008-01" db="EMBL/GenBank/DDBJ databases">
        <title>Complete sequence of Shewanella halifaxensis HAW-EB4.</title>
        <authorList>
            <consortium name="US DOE Joint Genome Institute"/>
            <person name="Copeland A."/>
            <person name="Lucas S."/>
            <person name="Lapidus A."/>
            <person name="Glavina del Rio T."/>
            <person name="Dalin E."/>
            <person name="Tice H."/>
            <person name="Bruce D."/>
            <person name="Goodwin L."/>
            <person name="Pitluck S."/>
            <person name="Sims D."/>
            <person name="Brettin T."/>
            <person name="Detter J.C."/>
            <person name="Han C."/>
            <person name="Kuske C.R."/>
            <person name="Schmutz J."/>
            <person name="Larimer F."/>
            <person name="Land M."/>
            <person name="Hauser L."/>
            <person name="Kyrpides N."/>
            <person name="Kim E."/>
            <person name="Zhao J.-S."/>
            <person name="Richardson P."/>
        </authorList>
    </citation>
    <scope>NUCLEOTIDE SEQUENCE [LARGE SCALE GENOMIC DNA]</scope>
    <source>
        <strain>HAW-EB4</strain>
    </source>
</reference>